<reference key="1">
    <citation type="journal article" date="2009" name="PLoS Pathog.">
        <title>Molecular evolutionary consequences of niche restriction in Francisella tularensis, a facultative intracellular pathogen.</title>
        <authorList>
            <person name="Larsson P."/>
            <person name="Elfsmark D."/>
            <person name="Svensson K."/>
            <person name="Wikstroem P."/>
            <person name="Forsman M."/>
            <person name="Brettin T."/>
            <person name="Keim P."/>
            <person name="Johansson A."/>
        </authorList>
    </citation>
    <scope>NUCLEOTIDE SEQUENCE [LARGE SCALE GENOMIC DNA]</scope>
    <source>
        <strain>FSC147</strain>
    </source>
</reference>
<comment type="similarity">
    <text evidence="1">Belongs to the UPF0301 (AlgH) family.</text>
</comment>
<proteinExistence type="inferred from homology"/>
<feature type="chain" id="PRO_1000198277" description="UPF0301 protein FTM_0963">
    <location>
        <begin position="1"/>
        <end position="194"/>
    </location>
</feature>
<dbReference type="EMBL" id="CP000915">
    <property type="protein sequence ID" value="ACD30891.1"/>
    <property type="molecule type" value="Genomic_DNA"/>
</dbReference>
<dbReference type="SMR" id="B2SGN2"/>
<dbReference type="KEGG" id="ftm:FTM_0963"/>
<dbReference type="HOGENOM" id="CLU_057596_1_0_6"/>
<dbReference type="GO" id="GO:0005829">
    <property type="term" value="C:cytosol"/>
    <property type="evidence" value="ECO:0007669"/>
    <property type="project" value="TreeGrafter"/>
</dbReference>
<dbReference type="Gene3D" id="3.40.1740.10">
    <property type="entry name" value="VC0467-like"/>
    <property type="match status" value="1"/>
</dbReference>
<dbReference type="Gene3D" id="3.30.70.1300">
    <property type="entry name" value="VC0467-like domains"/>
    <property type="match status" value="1"/>
</dbReference>
<dbReference type="HAMAP" id="MF_00758">
    <property type="entry name" value="UPF0301"/>
    <property type="match status" value="1"/>
</dbReference>
<dbReference type="InterPro" id="IPR003774">
    <property type="entry name" value="AlgH-like"/>
</dbReference>
<dbReference type="PANTHER" id="PTHR30327">
    <property type="entry name" value="UNCHARACTERIZED PROTEIN YQGE"/>
    <property type="match status" value="1"/>
</dbReference>
<dbReference type="PANTHER" id="PTHR30327:SF1">
    <property type="entry name" value="UPF0301 PROTEIN YQGE"/>
    <property type="match status" value="1"/>
</dbReference>
<dbReference type="Pfam" id="PF02622">
    <property type="entry name" value="DUF179"/>
    <property type="match status" value="1"/>
</dbReference>
<dbReference type="SUPFAM" id="SSF143456">
    <property type="entry name" value="VC0467-like"/>
    <property type="match status" value="1"/>
</dbReference>
<gene>
    <name type="ordered locus">FTM_0963</name>
</gene>
<accession>B2SGN2</accession>
<name>Y963_FRATM</name>
<evidence type="ECO:0000255" key="1">
    <source>
        <dbReference type="HAMAP-Rule" id="MF_00758"/>
    </source>
</evidence>
<organism>
    <name type="scientific">Francisella tularensis subsp. mediasiatica (strain FSC147)</name>
    <dbReference type="NCBI Taxonomy" id="441952"/>
    <lineage>
        <taxon>Bacteria</taxon>
        <taxon>Pseudomonadati</taxon>
        <taxon>Pseudomonadota</taxon>
        <taxon>Gammaproteobacteria</taxon>
        <taxon>Thiotrichales</taxon>
        <taxon>Francisellaceae</taxon>
        <taxon>Francisella</taxon>
    </lineage>
</organism>
<sequence>MYQNHKNEILLATPLIKDDIVFTKSVVYLCQNDRHGAMGLIINKPLADTLKDVFEELHIPHTNTFKEILEYPLYMGGPISPHKIMILHTTNGRNYTSTIKLDEGLAITASIDILEDIANNILPEYFLPVVGYSCWTANQLTDEIKSNDWIVTNKLNKKILFNHENKVKWQNHLEHAGYTLQSLDTLFNRNTGNC</sequence>
<protein>
    <recommendedName>
        <fullName evidence="1">UPF0301 protein FTM_0963</fullName>
    </recommendedName>
</protein>